<dbReference type="EC" id="2.7.7.66" evidence="1"/>
<dbReference type="EMBL" id="AM039952">
    <property type="protein sequence ID" value="CAJ22229.1"/>
    <property type="molecule type" value="Genomic_DNA"/>
</dbReference>
<dbReference type="RefSeq" id="WP_011346232.1">
    <property type="nucleotide sequence ID" value="NZ_CP017190.1"/>
</dbReference>
<dbReference type="SMR" id="Q3BY34"/>
<dbReference type="STRING" id="456327.BJD11_19830"/>
<dbReference type="KEGG" id="xcv:XCV0598"/>
<dbReference type="eggNOG" id="ENOG503268I">
    <property type="taxonomic scope" value="Bacteria"/>
</dbReference>
<dbReference type="HOGENOM" id="CLU_075747_0_1_6"/>
<dbReference type="Proteomes" id="UP000007069">
    <property type="component" value="Chromosome"/>
</dbReference>
<dbReference type="GO" id="GO:0016779">
    <property type="term" value="F:nucleotidyltransferase activity"/>
    <property type="evidence" value="ECO:0007669"/>
    <property type="project" value="UniProtKB-UniRule"/>
</dbReference>
<dbReference type="HAMAP" id="MF_00650">
    <property type="entry name" value="Malonate_MdcG"/>
    <property type="match status" value="1"/>
</dbReference>
<dbReference type="InterPro" id="IPR017557">
    <property type="entry name" value="Holo-ACP_synthase"/>
</dbReference>
<dbReference type="InterPro" id="IPR049180">
    <property type="entry name" value="MdcG_C"/>
</dbReference>
<dbReference type="InterPro" id="IPR048903">
    <property type="entry name" value="MdcG_N"/>
</dbReference>
<dbReference type="NCBIfam" id="TIGR03135">
    <property type="entry name" value="malonate_mdcG"/>
    <property type="match status" value="1"/>
</dbReference>
<dbReference type="Pfam" id="PF10620">
    <property type="entry name" value="MdcG"/>
    <property type="match status" value="1"/>
</dbReference>
<dbReference type="Pfam" id="PF20866">
    <property type="entry name" value="MdcG_N"/>
    <property type="match status" value="1"/>
</dbReference>
<evidence type="ECO:0000255" key="1">
    <source>
        <dbReference type="HAMAP-Rule" id="MF_00650"/>
    </source>
</evidence>
<feature type="chain" id="PRO_1000061474" description="Phosphoribosyl-dephospho-CoA transferase">
    <location>
        <begin position="1"/>
        <end position="213"/>
    </location>
</feature>
<feature type="active site" evidence="1">
    <location>
        <position position="135"/>
    </location>
</feature>
<feature type="active site" evidence="1">
    <location>
        <position position="137"/>
    </location>
</feature>
<name>MDCG_XANE5</name>
<gene>
    <name evidence="1" type="primary">mdcG</name>
    <name type="ordered locus">XCV0598</name>
</gene>
<keyword id="KW-0548">Nucleotidyltransferase</keyword>
<keyword id="KW-0808">Transferase</keyword>
<comment type="function">
    <text evidence="1">Transfers 2'-(5-triphosphoribosyl)-3'-dephosphocoenzyme-A to the apo-[acyl-carrier-protein] of the malonate decarboxylase to yield holo-[acyl-carrier-protein].</text>
</comment>
<comment type="catalytic activity">
    <reaction evidence="1">
        <text>apo-[malonate decarboxylase ACP] + 2'-(5''-triphospho-alpha-D-ribosyl)-3'-dephospho-CoA = holo-[malonate decarboxylase ACP] + diphosphate</text>
        <dbReference type="Rhea" id="RHEA:42644"/>
        <dbReference type="Rhea" id="RHEA-COMP:10160"/>
        <dbReference type="Rhea" id="RHEA-COMP:10161"/>
        <dbReference type="ChEBI" id="CHEBI:29999"/>
        <dbReference type="ChEBI" id="CHEBI:33019"/>
        <dbReference type="ChEBI" id="CHEBI:61378"/>
        <dbReference type="ChEBI" id="CHEBI:82683"/>
        <dbReference type="EC" id="2.7.7.66"/>
    </reaction>
</comment>
<comment type="similarity">
    <text evidence="1">Belongs to the MdcG family.</text>
</comment>
<organism>
    <name type="scientific">Xanthomonas euvesicatoria pv. vesicatoria (strain 85-10)</name>
    <name type="common">Xanthomonas campestris pv. vesicatoria</name>
    <dbReference type="NCBI Taxonomy" id="316273"/>
    <lineage>
        <taxon>Bacteria</taxon>
        <taxon>Pseudomonadati</taxon>
        <taxon>Pseudomonadota</taxon>
        <taxon>Gammaproteobacteria</taxon>
        <taxon>Lysobacterales</taxon>
        <taxon>Lysobacteraceae</taxon>
        <taxon>Xanthomonas</taxon>
    </lineage>
</organism>
<reference key="1">
    <citation type="journal article" date="2005" name="J. Bacteriol.">
        <title>Insights into genome plasticity and pathogenicity of the plant pathogenic Bacterium Xanthomonas campestris pv. vesicatoria revealed by the complete genome sequence.</title>
        <authorList>
            <person name="Thieme F."/>
            <person name="Koebnik R."/>
            <person name="Bekel T."/>
            <person name="Berger C."/>
            <person name="Boch J."/>
            <person name="Buettner D."/>
            <person name="Caldana C."/>
            <person name="Gaigalat L."/>
            <person name="Goesmann A."/>
            <person name="Kay S."/>
            <person name="Kirchner O."/>
            <person name="Lanz C."/>
            <person name="Linke B."/>
            <person name="McHardy A.C."/>
            <person name="Meyer F."/>
            <person name="Mittenhuber G."/>
            <person name="Nies D.H."/>
            <person name="Niesbach-Kloesgen U."/>
            <person name="Patschkowski T."/>
            <person name="Rueckert C."/>
            <person name="Rupp O."/>
            <person name="Schneiker S."/>
            <person name="Schuster S.C."/>
            <person name="Vorhoelter F.J."/>
            <person name="Weber E."/>
            <person name="Puehler A."/>
            <person name="Bonas U."/>
            <person name="Bartels D."/>
            <person name="Kaiser O."/>
        </authorList>
    </citation>
    <scope>NUCLEOTIDE SEQUENCE [LARGE SCALE GENOMIC DNA]</scope>
    <source>
        <strain>85-10</strain>
    </source>
</reference>
<proteinExistence type="inferred from homology"/>
<protein>
    <recommendedName>
        <fullName evidence="1">Phosphoribosyl-dephospho-CoA transferase</fullName>
        <ecNumber evidence="1">2.7.7.66</ecNumber>
    </recommendedName>
    <alternativeName>
        <fullName evidence="1">Malonate decarboxylase holo-[acyl-carrier-protein] synthase</fullName>
        <shortName evidence="1">Holo-ACP synthase</shortName>
    </alternativeName>
</protein>
<accession>Q3BY34</accession>
<sequence>MAGRHALVWLREDAQWQAVTPGAQPRLRQWFAAGLPAVVARGDGSQAPGSVRLGVPLPPSEGKQRLALQAHVADIARCTAPLTLDAVTPQAPVAVQPLLQALLAQARAHALRPHVFGSFAWQALTGLTYVHAQSDLDLLWPIETPEQARALVTLLQRWEQQHGLRADGELLLPEDNAVNWREYAGTAQQVLVKSNQDCRLLPRAALFPVRSAA</sequence>